<organismHost>
    <name type="scientific">Homo sapiens</name>
    <name type="common">Human</name>
    <dbReference type="NCBI Taxonomy" id="9606"/>
</organismHost>
<feature type="chain" id="PRO_0000368070" description="Protein VP3">
    <location>
        <begin position="1"/>
        <end position="835"/>
    </location>
</feature>
<feature type="region of interest" description="N7-methyltransferase activity" evidence="1">
    <location>
        <begin position="171"/>
        <end position="245"/>
    </location>
</feature>
<feature type="region of interest" description="2'-O-methyltransferase activity" evidence="1">
    <location>
        <begin position="246"/>
        <end position="428"/>
    </location>
</feature>
<feature type="region of interest" description="N7-methyltransferase activity" evidence="1">
    <location>
        <begin position="429"/>
        <end position="555"/>
    </location>
</feature>
<feature type="region of interest" description="GTase/RTPase activity" evidence="1">
    <location>
        <begin position="556"/>
        <end position="692"/>
    </location>
</feature>
<feature type="region of interest" description="2'-5'-phosphodiesterase activity" evidence="1">
    <location>
        <begin position="693"/>
        <end position="835"/>
    </location>
</feature>
<feature type="active site" description="For 2'-5'-phosphodiesterase activity" evidence="1">
    <location>
        <position position="718"/>
    </location>
</feature>
<feature type="active site" description="For 2'-5'-phosphodiesterase activity" evidence="1">
    <location>
        <position position="720"/>
    </location>
</feature>
<feature type="active site" description="For 2'-5'-phosphodiesterase activity" evidence="1">
    <location>
        <position position="797"/>
    </location>
</feature>
<feature type="active site" description="For 2'-5'-phosphodiesterase activity" evidence="1">
    <location>
        <position position="799"/>
    </location>
</feature>
<feature type="sequence conflict" description="In Ref. 1; AAQ21044." evidence="2" ref="1">
    <original>N</original>
    <variation>K</variation>
    <location>
        <position position="230"/>
    </location>
</feature>
<feature type="sequence conflict" description="In Ref. 1; AAQ21044." evidence="2" ref="1">
    <original>L</original>
    <variation>I</variation>
    <location>
        <position position="247"/>
    </location>
</feature>
<feature type="sequence conflict" description="In Ref. 1; AAQ21044." evidence="2" ref="1">
    <original>M</original>
    <variation>V</variation>
    <location>
        <position position="567"/>
    </location>
</feature>
<feature type="sequence conflict" description="In Ref. 1; AAQ21044." evidence="2" ref="1">
    <original>Q</original>
    <variation>E</variation>
    <location>
        <position position="643"/>
    </location>
</feature>
<evidence type="ECO:0000255" key="1">
    <source>
        <dbReference type="HAMAP-Rule" id="MF_04128"/>
    </source>
</evidence>
<evidence type="ECO:0000305" key="2"/>
<name>VP3_ROTWI</name>
<organism>
    <name type="scientific">Rotavirus A (isolate RVA/Human/United States/WI61/1983/G9P1A[8])</name>
    <name type="common">RV-A</name>
    <dbReference type="NCBI Taxonomy" id="578830"/>
    <lineage>
        <taxon>Viruses</taxon>
        <taxon>Riboviria</taxon>
        <taxon>Orthornavirae</taxon>
        <taxon>Duplornaviricota</taxon>
        <taxon>Resentoviricetes</taxon>
        <taxon>Reovirales</taxon>
        <taxon>Sedoreoviridae</taxon>
        <taxon>Rotavirus</taxon>
        <taxon>Rotavirus A</taxon>
    </lineage>
</organism>
<protein>
    <recommendedName>
        <fullName evidence="1">Protein VP3</fullName>
    </recommendedName>
    <domain>
        <recommendedName>
            <fullName evidence="1">2',5'-phosphodiesterase</fullName>
            <ecNumber evidence="1">3.1.4.-</ecNumber>
        </recommendedName>
    </domain>
    <domain>
        <recommendedName>
            <fullName evidence="1">mRNA guanylyltransferase</fullName>
            <ecNumber evidence="1">2.7.7.50</ecNumber>
        </recommendedName>
    </domain>
    <domain>
        <recommendedName>
            <fullName evidence="1">mRNA (guanine-N(7))-methyltransferase</fullName>
            <ecNumber evidence="1">2.1.1.56</ecNumber>
        </recommendedName>
    </domain>
</protein>
<accession>B1NKU3</accession>
<accession>Q6WNW2</accession>
<proteinExistence type="inferred from homology"/>
<sequence length="835" mass="97989">MKVLALRHSVAQVYADTQTYLHDDSKDEYENAFLISNLTTHNILYLNYSLKTLKILNKSGIAAVEVQSLDELFALIRCNFTYDYENNIVYLHDYSYYTNNEIRTDQHWITKTDITEYLLPGWKLTYVGYNGKNTRGHYNFSFSCQNAATDDDIIVEYIYSNELDFQNFLLRKIKERMTTSLPIARLSNRVFRDKLFPSIMNIHKKVINVGPRNESMFTFLNFPTIKQFSNGAYIVKHTIKLKQEKWLGKRVSQFDIGQYKNMLNIVTTIYYYYNLYHSKPIIYMLGSAPSYWIHDIKQYSDFTFETWDPLDTPYSTIHHKELFFDKDVNKLRDNSVLYIDIRTDRKNIDWKEWRKIVEQQTVSNLNIAYKYLATGKAKVCCVKLTAMDLELPITAKLLHHPTTEVRSEFYAILDVWDIINIKRFIPKGVFYAFINNITTDNVFIQPPFKLKASPTDYIVALYALSNDFNSRQDVINLINKQKQSLITVRINNTFKDEPKVNFKNIYDWTFLPTDFELKDSVITSYDGCLGMFGLSISLSSKPTGNNHLFIINGTDKYYKLDQYANHMSISRRSHQIRFSESATSYSGYIFRDLSNNNFNLIGTNVENSVSGHVYNALIYYRYNYTFDLKRWIYLHSIGKVAVQGGRYYEHAPIELIYACRSAREFAILQDDLTVLRYANEIEEYINKVYSITYADDPNYFIGIKFNSIPYEYDVKVPHLTLGVLFISDNMIHDVVTVLKKMKTELFKTEISTSYTYMLSDNMYVANASGVLSTYFKLYNMFYRNHITFGQSRMFIPHITLSFSNKQTVRIESTRLKINSIYLRKIKGETVFDMSE</sequence>
<comment type="function">
    <text evidence="1">Multifunctional enzyme involved in mRNA capping. Catalyzes the formation of the 5' cap structure on the viral plus-strand transcripts. Specifically binds to GTP and displays guanylyltransferase and methyltransferase activities. Has affinity for ssRNA but not for dsRNA. Capping activity is non-specific and caps RNAs that initiate with either a G or an A residue. Together with VP1 polymerase, forms a VP1-VP3 complex positioned near the channels situated at each of the five-fold vertices of the core. Following infection, the outermost layer of the virus is lost, leaving a double-layered particle (DLP) made up of the core and VP6 shell. VP1 then catalyzes the transcription of fully conservative plus-strand genomic RNAs that are capped by VP3 and extruded through the DLP's channels into the cytoplasm where they function as mRNAs for translation of viral proteins. DLPs probably have an RNA triphosphatase activity as well, whereas open cores do not.</text>
</comment>
<comment type="function">
    <text evidence="1">Counteracts the host innate immune response thanks to its phosphodiesterase that degrades the 5'-triphosphorylated, 2'-5' linked adenylate oligomers produced by the host cell IFN-inducible 2',5'-oligoadenylate synthetase (OAS). The host RNaseL is therefore not activated.</text>
</comment>
<comment type="catalytic activity">
    <reaction evidence="1">
        <text>a 5'-end diphospho-ribonucleoside in mRNA + GTP + H(+) = a 5'-end (5'-triphosphoguanosine)-ribonucleoside in mRNA + diphosphate</text>
        <dbReference type="Rhea" id="RHEA:67012"/>
        <dbReference type="Rhea" id="RHEA-COMP:17165"/>
        <dbReference type="Rhea" id="RHEA-COMP:17166"/>
        <dbReference type="ChEBI" id="CHEBI:15378"/>
        <dbReference type="ChEBI" id="CHEBI:33019"/>
        <dbReference type="ChEBI" id="CHEBI:37565"/>
        <dbReference type="ChEBI" id="CHEBI:167616"/>
        <dbReference type="ChEBI" id="CHEBI:167617"/>
        <dbReference type="EC" id="2.7.7.50"/>
    </reaction>
</comment>
<comment type="catalytic activity">
    <reaction evidence="1">
        <text>a 5'-end (5'-triphosphoguanosine)-ribonucleoside in mRNA + S-adenosyl-L-methionine = a 5'-end (N(7)-methyl 5'-triphosphoguanosine)-ribonucleoside in mRNA + S-adenosyl-L-homocysteine</text>
        <dbReference type="Rhea" id="RHEA:67008"/>
        <dbReference type="Rhea" id="RHEA-COMP:17166"/>
        <dbReference type="Rhea" id="RHEA-COMP:17167"/>
        <dbReference type="ChEBI" id="CHEBI:57856"/>
        <dbReference type="ChEBI" id="CHEBI:59789"/>
        <dbReference type="ChEBI" id="CHEBI:156461"/>
        <dbReference type="ChEBI" id="CHEBI:167617"/>
        <dbReference type="EC" id="2.1.1.56"/>
    </reaction>
</comment>
<comment type="catalytic activity">
    <reaction evidence="1">
        <text>5'-triphosphoadenylyl-(2'-&gt;5')-adenylyl-(2'-&gt;5')-adenosine + 2 H2O = 2 AMP + ATP + 2 H(+)</text>
        <dbReference type="Rhea" id="RHEA:45964"/>
        <dbReference type="ChEBI" id="CHEBI:15377"/>
        <dbReference type="ChEBI" id="CHEBI:15378"/>
        <dbReference type="ChEBI" id="CHEBI:30616"/>
        <dbReference type="ChEBI" id="CHEBI:67143"/>
        <dbReference type="ChEBI" id="CHEBI:456215"/>
    </reaction>
</comment>
<comment type="subunit">
    <text evidence="1">Interacts with VP1. Interacts with VP2.</text>
</comment>
<comment type="subcellular location">
    <subcellularLocation>
        <location evidence="1">Virion</location>
    </subcellularLocation>
    <text evidence="1">Attached inside the inner capsid as a minor component. There are about 11 to 12 copies per virion.</text>
</comment>
<comment type="domain">
    <text evidence="1">Contains a bipartite N7-methyltransferase domain, a 2'-O-methyltransferase domain and a GTase/RTPase domain. The C-terminus contains a phosphodiesterase domain that degrades the 5'-triphosphorylated, 2'-5' linked adenylate oligomers produced by the host cell in response to IFN stimulation.</text>
</comment>
<comment type="similarity">
    <text evidence="1">Belongs to the rotavirus VP3 family.</text>
</comment>
<dbReference type="EC" id="3.1.4.-" evidence="1"/>
<dbReference type="EC" id="2.7.7.50" evidence="1"/>
<dbReference type="EC" id="2.1.1.56" evidence="1"/>
<dbReference type="EMBL" id="AY277917">
    <property type="protein sequence ID" value="AAQ21044.1"/>
    <property type="molecule type" value="Genomic_RNA"/>
</dbReference>
<dbReference type="EMBL" id="EF583051">
    <property type="protein sequence ID" value="ABU87860.1"/>
    <property type="molecule type" value="Genomic_RNA"/>
</dbReference>
<dbReference type="SMR" id="B1NKU3"/>
<dbReference type="Proteomes" id="UP000006580">
    <property type="component" value="Genome"/>
</dbReference>
<dbReference type="GO" id="GO:0019013">
    <property type="term" value="C:viral nucleocapsid"/>
    <property type="evidence" value="ECO:0007669"/>
    <property type="project" value="UniProtKB-UniRule"/>
</dbReference>
<dbReference type="GO" id="GO:0005525">
    <property type="term" value="F:GTP binding"/>
    <property type="evidence" value="ECO:0007669"/>
    <property type="project" value="UniProtKB-UniRule"/>
</dbReference>
<dbReference type="GO" id="GO:0016787">
    <property type="term" value="F:hydrolase activity"/>
    <property type="evidence" value="ECO:0007669"/>
    <property type="project" value="UniProtKB-KW"/>
</dbReference>
<dbReference type="GO" id="GO:0004482">
    <property type="term" value="F:mRNA 5'-cap (guanine-N7-)-methyltransferase activity"/>
    <property type="evidence" value="ECO:0007669"/>
    <property type="project" value="UniProtKB-UniRule"/>
</dbReference>
<dbReference type="GO" id="GO:0004484">
    <property type="term" value="F:mRNA guanylyltransferase activity"/>
    <property type="evidence" value="ECO:0007669"/>
    <property type="project" value="UniProtKB-UniRule"/>
</dbReference>
<dbReference type="GO" id="GO:0003723">
    <property type="term" value="F:RNA binding"/>
    <property type="evidence" value="ECO:0007669"/>
    <property type="project" value="UniProtKB-UniRule"/>
</dbReference>
<dbReference type="GO" id="GO:0052170">
    <property type="term" value="P:symbiont-mediated suppression of host innate immune response"/>
    <property type="evidence" value="ECO:0007669"/>
    <property type="project" value="UniProtKB-KW"/>
</dbReference>
<dbReference type="GO" id="GO:0016032">
    <property type="term" value="P:viral process"/>
    <property type="evidence" value="ECO:0007669"/>
    <property type="project" value="UniProtKB-UniRule"/>
</dbReference>
<dbReference type="CDD" id="cd20757">
    <property type="entry name" value="capping_2-OMTase_Rotavirus"/>
    <property type="match status" value="1"/>
</dbReference>
<dbReference type="HAMAP" id="MF_04124">
    <property type="entry name" value="Rota_VP3"/>
    <property type="match status" value="1"/>
</dbReference>
<dbReference type="HAMAP" id="MF_04128">
    <property type="entry name" value="Rota_VP3_A"/>
    <property type="match status" value="1"/>
</dbReference>
<dbReference type="InterPro" id="IPR011181">
    <property type="entry name" value="VP3_Rotav"/>
</dbReference>
<dbReference type="Pfam" id="PF06929">
    <property type="entry name" value="Rotavirus_VP3"/>
    <property type="match status" value="1"/>
</dbReference>
<dbReference type="PIRSF" id="PIRSF004015">
    <property type="entry name" value="LigT_rotavirus"/>
    <property type="match status" value="1"/>
</dbReference>
<dbReference type="PROSITE" id="PS51589">
    <property type="entry name" value="SAM_MT56_VP3"/>
    <property type="match status" value="1"/>
</dbReference>
<reference key="1">
    <citation type="journal article" date="2004" name="J. Gen. Virol.">
        <title>Sequence analysis of the guanylyltransferase (VP3) of group A rotaviruses.</title>
        <authorList>
            <person name="Cook J.P."/>
            <person name="McCrae M.A."/>
        </authorList>
    </citation>
    <scope>NUCLEOTIDE SEQUENCE [GENOMIC RNA]</scope>
</reference>
<reference key="2">
    <citation type="journal article" date="2008" name="J. Virol.">
        <title>Full genome-based classification of rotaviruses reveals a common origin between human Wa-Like and porcine rotavirus strains and human DS-1-like and bovine rotavirus strains.</title>
        <authorList>
            <person name="Matthijnssens J."/>
            <person name="Ciarlet M."/>
            <person name="Heiman E.M."/>
            <person name="Arijs I."/>
            <person name="Delbeke T."/>
            <person name="McDonald S.M."/>
            <person name="Palombo E.A."/>
            <person name="Iturriza-Gomara M."/>
            <person name="Maes P."/>
            <person name="Patton J.T."/>
            <person name="Rahman M."/>
            <person name="Van Ranst M."/>
        </authorList>
    </citation>
    <scope>NUCLEOTIDE SEQUENCE [GENOMIC RNA]</scope>
</reference>
<keyword id="KW-0342">GTP-binding</keyword>
<keyword id="KW-0945">Host-virus interaction</keyword>
<keyword id="KW-0378">Hydrolase</keyword>
<keyword id="KW-1090">Inhibition of host innate immune response by virus</keyword>
<keyword id="KW-0489">Methyltransferase</keyword>
<keyword id="KW-0506">mRNA capping</keyword>
<keyword id="KW-0507">mRNA processing</keyword>
<keyword id="KW-0511">Multifunctional enzyme</keyword>
<keyword id="KW-0547">Nucleotide-binding</keyword>
<keyword id="KW-0548">Nucleotidyltransferase</keyword>
<keyword id="KW-0694">RNA-binding</keyword>
<keyword id="KW-0949">S-adenosyl-L-methionine</keyword>
<keyword id="KW-0808">Transferase</keyword>
<keyword id="KW-0899">Viral immunoevasion</keyword>
<keyword id="KW-0946">Virion</keyword>